<organism>
    <name type="scientific">Caiman crocodilus</name>
    <name type="common">Spectacled caiman</name>
    <name type="synonym">Caiman sclerops</name>
    <dbReference type="NCBI Taxonomy" id="8499"/>
    <lineage>
        <taxon>Eukaryota</taxon>
        <taxon>Metazoa</taxon>
        <taxon>Chordata</taxon>
        <taxon>Craniata</taxon>
        <taxon>Vertebrata</taxon>
        <taxon>Euteleostomi</taxon>
        <taxon>Archelosauria</taxon>
        <taxon>Archosauria</taxon>
        <taxon>Crocodylia</taxon>
        <taxon>Alligatoridae</taxon>
        <taxon>Caimaninae</taxon>
        <taxon>Caiman</taxon>
    </lineage>
</organism>
<dbReference type="EMBL" id="M12769">
    <property type="protein sequence ID" value="AAA49193.1"/>
    <property type="molecule type" value="Genomic_DNA"/>
</dbReference>
<dbReference type="PIR" id="A02084">
    <property type="entry name" value="HVCQE1"/>
</dbReference>
<dbReference type="SMR" id="P03981"/>
<dbReference type="GO" id="GO:0005576">
    <property type="term" value="C:extracellular region"/>
    <property type="evidence" value="ECO:0007669"/>
    <property type="project" value="UniProtKB-ARBA"/>
</dbReference>
<dbReference type="GO" id="GO:0019814">
    <property type="term" value="C:immunoglobulin complex"/>
    <property type="evidence" value="ECO:0007669"/>
    <property type="project" value="UniProtKB-KW"/>
</dbReference>
<dbReference type="GO" id="GO:0002250">
    <property type="term" value="P:adaptive immune response"/>
    <property type="evidence" value="ECO:0007669"/>
    <property type="project" value="UniProtKB-KW"/>
</dbReference>
<dbReference type="Gene3D" id="2.60.40.10">
    <property type="entry name" value="Immunoglobulins"/>
    <property type="match status" value="1"/>
</dbReference>
<dbReference type="InterPro" id="IPR007110">
    <property type="entry name" value="Ig-like_dom"/>
</dbReference>
<dbReference type="InterPro" id="IPR036179">
    <property type="entry name" value="Ig-like_dom_sf"/>
</dbReference>
<dbReference type="InterPro" id="IPR013783">
    <property type="entry name" value="Ig-like_fold"/>
</dbReference>
<dbReference type="InterPro" id="IPR013106">
    <property type="entry name" value="Ig_V-set"/>
</dbReference>
<dbReference type="InterPro" id="IPR050199">
    <property type="entry name" value="IgHV"/>
</dbReference>
<dbReference type="PANTHER" id="PTHR23266">
    <property type="entry name" value="IMMUNOGLOBULIN HEAVY CHAIN"/>
    <property type="match status" value="1"/>
</dbReference>
<dbReference type="Pfam" id="PF07686">
    <property type="entry name" value="V-set"/>
    <property type="match status" value="1"/>
</dbReference>
<dbReference type="SMART" id="SM00406">
    <property type="entry name" value="IGv"/>
    <property type="match status" value="1"/>
</dbReference>
<dbReference type="SUPFAM" id="SSF48726">
    <property type="entry name" value="Immunoglobulin"/>
    <property type="match status" value="1"/>
</dbReference>
<dbReference type="PROSITE" id="PS50835">
    <property type="entry name" value="IG_LIKE"/>
    <property type="match status" value="1"/>
</dbReference>
<sequence length="117" mass="12826">MLSWGYFLFLLPTLPGAQSQVQLVESGGDVRKPGDSLRLSCKGSGFTFSNYWLGWVRQAPGKALNGSLPLTPLAAAPTYIPGVSGRFTISRDNARALLHLDMSDLRPEDTGRYHCER</sequence>
<name>HV02_CAICR</name>
<protein>
    <recommendedName>
        <fullName>Ig heavy chain V region E1</fullName>
    </recommendedName>
</protein>
<evidence type="ECO:0000255" key="1">
    <source>
        <dbReference type="PROSITE-ProRule" id="PRU00114"/>
    </source>
</evidence>
<accession>P03981</accession>
<proteinExistence type="predicted"/>
<gene>
    <name type="primary">E1</name>
</gene>
<feature type="signal peptide">
    <location>
        <begin position="1"/>
        <end position="19"/>
    </location>
</feature>
<feature type="chain" id="PRO_0000015208" description="Ig heavy chain V region E1">
    <location>
        <begin position="20"/>
        <end position="117"/>
    </location>
</feature>
<feature type="region of interest" description="Framework-1">
    <location>
        <begin position="20"/>
        <end position="49"/>
    </location>
</feature>
<feature type="region of interest" description="Complementarity-determining-1">
    <location>
        <begin position="50"/>
        <end position="54"/>
    </location>
</feature>
<feature type="region of interest" description="Framework-2">
    <location>
        <begin position="55"/>
        <end position="68"/>
    </location>
</feature>
<feature type="region of interest" description="Complementarity-determining-2">
    <location>
        <begin position="69"/>
        <end position="85"/>
    </location>
</feature>
<feature type="region of interest" description="Framework-3">
    <location>
        <begin position="86"/>
        <end position="117"/>
    </location>
</feature>
<feature type="disulfide bond" evidence="1">
    <location>
        <begin position="41"/>
        <end position="115"/>
    </location>
</feature>
<feature type="non-terminal residue">
    <location>
        <position position="117"/>
    </location>
</feature>
<reference key="1">
    <citation type="journal article" date="1985" name="Proc. Natl. Acad. Sci. U.S.A.">
        <title>Complete nucleotide sequences of three VH genes in Caiman, a phylogenetically ancient reptile: evolutionary diversification in coding segments and variation in the structure and organization of recombination elements.</title>
        <authorList>
            <person name="Litman G.W."/>
            <person name="Murphy K."/>
            <person name="Berger L."/>
            <person name="Litman R."/>
            <person name="Hinds K."/>
            <person name="Erickson B.W."/>
        </authorList>
    </citation>
    <scope>NUCLEOTIDE SEQUENCE [GENOMIC DNA]</scope>
</reference>
<keyword id="KW-1064">Adaptive immunity</keyword>
<keyword id="KW-1015">Disulfide bond</keyword>
<keyword id="KW-0391">Immunity</keyword>
<keyword id="KW-1280">Immunoglobulin</keyword>
<keyword id="KW-0732">Signal</keyword>